<feature type="transit peptide" description="Mitochondrion" evidence="1">
    <location>
        <begin position="1"/>
        <end position="31"/>
    </location>
</feature>
<feature type="chain" id="PRO_0000307783" description="Probable tRNA N6-adenosine threonylcarbamoyltransferase, mitochondrial">
    <location>
        <begin position="32"/>
        <end position="409"/>
    </location>
</feature>
<feature type="binding site" evidence="1">
    <location>
        <position position="135"/>
    </location>
    <ligand>
        <name>a divalent metal cation</name>
        <dbReference type="ChEBI" id="CHEBI:60240"/>
    </ligand>
</feature>
<feature type="binding site" evidence="1">
    <location>
        <position position="139"/>
    </location>
    <ligand>
        <name>a divalent metal cation</name>
        <dbReference type="ChEBI" id="CHEBI:60240"/>
    </ligand>
</feature>
<feature type="binding site" evidence="1">
    <location>
        <begin position="159"/>
        <end position="163"/>
    </location>
    <ligand>
        <name>substrate</name>
    </ligand>
</feature>
<feature type="binding site" evidence="1">
    <location>
        <position position="192"/>
    </location>
    <ligand>
        <name>substrate</name>
    </ligand>
</feature>
<feature type="binding site" evidence="1">
    <location>
        <position position="212"/>
    </location>
    <ligand>
        <name>substrate</name>
    </ligand>
</feature>
<feature type="binding site" evidence="1">
    <location>
        <position position="216"/>
    </location>
    <ligand>
        <name>substrate</name>
    </ligand>
</feature>
<feature type="binding site" evidence="1">
    <location>
        <begin position="322"/>
        <end position="323"/>
    </location>
    <ligand>
        <name>substrate</name>
    </ligand>
</feature>
<feature type="binding site" evidence="1">
    <location>
        <position position="350"/>
    </location>
    <ligand>
        <name>substrate</name>
    </ligand>
</feature>
<feature type="binding site" evidence="1">
    <location>
        <position position="351"/>
    </location>
    <ligand>
        <name>a divalent metal cation</name>
        <dbReference type="ChEBI" id="CHEBI:60240"/>
    </ligand>
</feature>
<dbReference type="EC" id="2.3.1.234" evidence="1"/>
<dbReference type="EMBL" id="AE014298">
    <property type="protein sequence ID" value="AAF49008.1"/>
    <property type="molecule type" value="Genomic_DNA"/>
</dbReference>
<dbReference type="EMBL" id="AY051882">
    <property type="protein sequence ID" value="AAK93306.1"/>
    <property type="status" value="ALT_INIT"/>
    <property type="molecule type" value="mRNA"/>
</dbReference>
<dbReference type="EMBL" id="BT021224">
    <property type="protein sequence ID" value="AAX33372.1"/>
    <property type="molecule type" value="mRNA"/>
</dbReference>
<dbReference type="RefSeq" id="NP_001245765.1">
    <property type="nucleotide sequence ID" value="NM_001258836.2"/>
</dbReference>
<dbReference type="RefSeq" id="NP_608347.1">
    <property type="nucleotide sequence ID" value="NM_134503.4"/>
</dbReference>
<dbReference type="SMR" id="Q9VWD6"/>
<dbReference type="BioGRID" id="59278">
    <property type="interactions" value="2"/>
</dbReference>
<dbReference type="FunCoup" id="Q9VWD6">
    <property type="interactions" value="1968"/>
</dbReference>
<dbReference type="IntAct" id="Q9VWD6">
    <property type="interactions" value="1"/>
</dbReference>
<dbReference type="STRING" id="7227.FBpp0301156"/>
<dbReference type="PaxDb" id="7227-FBpp0301156"/>
<dbReference type="EnsemblMetazoa" id="FBtr0074814">
    <property type="protein sequence ID" value="FBpp0074583"/>
    <property type="gene ID" value="FBgn0031060"/>
</dbReference>
<dbReference type="EnsemblMetazoa" id="FBtr0309217">
    <property type="protein sequence ID" value="FBpp0301156"/>
    <property type="gene ID" value="FBgn0031060"/>
</dbReference>
<dbReference type="GeneID" id="32982"/>
<dbReference type="KEGG" id="dme:Dmel_CG14231"/>
<dbReference type="UCSC" id="CG14231-RA">
    <property type="organism name" value="d. melanogaster"/>
</dbReference>
<dbReference type="AGR" id="FB:FBgn0031060"/>
<dbReference type="CTD" id="32982"/>
<dbReference type="FlyBase" id="FBgn0031060">
    <property type="gene designation" value="Tcs4"/>
</dbReference>
<dbReference type="VEuPathDB" id="VectorBase:FBgn0031060"/>
<dbReference type="eggNOG" id="KOG2707">
    <property type="taxonomic scope" value="Eukaryota"/>
</dbReference>
<dbReference type="GeneTree" id="ENSGT00940000153744"/>
<dbReference type="HOGENOM" id="CLU_023208_1_2_1"/>
<dbReference type="InParanoid" id="Q9VWD6"/>
<dbReference type="OMA" id="NAAMIGC"/>
<dbReference type="OrthoDB" id="10259622at2759"/>
<dbReference type="PhylomeDB" id="Q9VWD6"/>
<dbReference type="BioGRID-ORCS" id="32982">
    <property type="hits" value="0 hits in 1 CRISPR screen"/>
</dbReference>
<dbReference type="ChiTaRS" id="CG14231">
    <property type="organism name" value="fly"/>
</dbReference>
<dbReference type="GenomeRNAi" id="32982"/>
<dbReference type="PRO" id="PR:Q9VWD6"/>
<dbReference type="Proteomes" id="UP000000803">
    <property type="component" value="Chromosome X"/>
</dbReference>
<dbReference type="Bgee" id="FBgn0031060">
    <property type="expression patterns" value="Expressed in adult enteroendocrine precursor cell in adult midgut (Drosophila) and 58 other cell types or tissues"/>
</dbReference>
<dbReference type="ExpressionAtlas" id="Q9VWD6">
    <property type="expression patterns" value="baseline and differential"/>
</dbReference>
<dbReference type="GO" id="GO:0005759">
    <property type="term" value="C:mitochondrial matrix"/>
    <property type="evidence" value="ECO:0000250"/>
    <property type="project" value="FlyBase"/>
</dbReference>
<dbReference type="GO" id="GO:0005739">
    <property type="term" value="C:mitochondrion"/>
    <property type="evidence" value="ECO:0000318"/>
    <property type="project" value="GO_Central"/>
</dbReference>
<dbReference type="GO" id="GO:0046872">
    <property type="term" value="F:metal ion binding"/>
    <property type="evidence" value="ECO:0007669"/>
    <property type="project" value="UniProtKB-KW"/>
</dbReference>
<dbReference type="GO" id="GO:0061711">
    <property type="term" value="F:N(6)-L-threonylcarbamoyladenine synthase activity"/>
    <property type="evidence" value="ECO:0000250"/>
    <property type="project" value="FlyBase"/>
</dbReference>
<dbReference type="GO" id="GO:0072670">
    <property type="term" value="P:mitochondrial tRNA threonylcarbamoyladenosine modification"/>
    <property type="evidence" value="ECO:0000250"/>
    <property type="project" value="FlyBase"/>
</dbReference>
<dbReference type="CDD" id="cd24134">
    <property type="entry name" value="ASKHA_NBD_OSGEPL1_QRI7_euk"/>
    <property type="match status" value="1"/>
</dbReference>
<dbReference type="FunFam" id="3.30.420.40:FF:000445">
    <property type="entry name" value="Probable tRNA N6-adenosine threonylcarbamoyltransferase, mitochondrial"/>
    <property type="match status" value="1"/>
</dbReference>
<dbReference type="FunFam" id="3.30.420.40:FF:000012">
    <property type="entry name" value="tRNA N6-adenosine threonylcarbamoyltransferase"/>
    <property type="match status" value="1"/>
</dbReference>
<dbReference type="Gene3D" id="3.30.420.40">
    <property type="match status" value="2"/>
</dbReference>
<dbReference type="HAMAP" id="MF_01445">
    <property type="entry name" value="TsaD"/>
    <property type="match status" value="1"/>
</dbReference>
<dbReference type="InterPro" id="IPR043129">
    <property type="entry name" value="ATPase_NBD"/>
</dbReference>
<dbReference type="InterPro" id="IPR000905">
    <property type="entry name" value="Gcp-like_dom"/>
</dbReference>
<dbReference type="InterPro" id="IPR017861">
    <property type="entry name" value="KAE1/TsaD"/>
</dbReference>
<dbReference type="InterPro" id="IPR022450">
    <property type="entry name" value="TsaD"/>
</dbReference>
<dbReference type="NCBIfam" id="TIGR00329">
    <property type="entry name" value="gcp_kae1"/>
    <property type="match status" value="1"/>
</dbReference>
<dbReference type="PANTHER" id="PTHR11735">
    <property type="entry name" value="TRNA N6-ADENOSINE THREONYLCARBAMOYLTRANSFERASE"/>
    <property type="match status" value="1"/>
</dbReference>
<dbReference type="PANTHER" id="PTHR11735:SF6">
    <property type="entry name" value="TRNA N6-ADENOSINE THREONYLCARBAMOYLTRANSFERASE, MITOCHONDRIAL"/>
    <property type="match status" value="1"/>
</dbReference>
<dbReference type="Pfam" id="PF00814">
    <property type="entry name" value="TsaD"/>
    <property type="match status" value="1"/>
</dbReference>
<dbReference type="PRINTS" id="PR00789">
    <property type="entry name" value="OSIALOPTASE"/>
</dbReference>
<dbReference type="SUPFAM" id="SSF53067">
    <property type="entry name" value="Actin-like ATPase domain"/>
    <property type="match status" value="1"/>
</dbReference>
<protein>
    <recommendedName>
        <fullName evidence="1">Probable tRNA N6-adenosine threonylcarbamoyltransferase, mitochondrial</fullName>
        <ecNumber evidence="1">2.3.1.234</ecNumber>
    </recommendedName>
    <alternativeName>
        <fullName evidence="1">N6-L-threonylcarbamoyladenine synthase</fullName>
        <shortName evidence="1">t(6)A synthase</shortName>
    </alternativeName>
    <alternativeName>
        <fullName evidence="3">Threonyl-carbamoyl synthesis 4</fullName>
    </alternativeName>
    <alternativeName>
        <fullName evidence="1">t(6)A37 threonylcarbamoyladenosine biosynthesis protein Tcs4</fullName>
    </alternativeName>
    <alternativeName>
        <fullName evidence="1">tRNA threonylcarbamoyladenosine biosynthesis protein Tcs4</fullName>
    </alternativeName>
</protein>
<evidence type="ECO:0000255" key="1">
    <source>
        <dbReference type="HAMAP-Rule" id="MF_03179"/>
    </source>
</evidence>
<evidence type="ECO:0000305" key="2"/>
<evidence type="ECO:0000312" key="3">
    <source>
        <dbReference type="FlyBase" id="FBgn0031060"/>
    </source>
</evidence>
<organism>
    <name type="scientific">Drosophila melanogaster</name>
    <name type="common">Fruit fly</name>
    <dbReference type="NCBI Taxonomy" id="7227"/>
    <lineage>
        <taxon>Eukaryota</taxon>
        <taxon>Metazoa</taxon>
        <taxon>Ecdysozoa</taxon>
        <taxon>Arthropoda</taxon>
        <taxon>Hexapoda</taxon>
        <taxon>Insecta</taxon>
        <taxon>Pterygota</taxon>
        <taxon>Neoptera</taxon>
        <taxon>Endopterygota</taxon>
        <taxon>Diptera</taxon>
        <taxon>Brachycera</taxon>
        <taxon>Muscomorpha</taxon>
        <taxon>Ephydroidea</taxon>
        <taxon>Drosophilidae</taxon>
        <taxon>Drosophila</taxon>
        <taxon>Sophophora</taxon>
    </lineage>
</organism>
<sequence length="409" mass="45329">MHALRNFAGNGIANVFGCGIRRRLSYVLGIETSCDDTGIAIVDTTGRVIANVLESQQEFHTRYGGIIPPRAQDLHRARIESAYQRCMEAAQLKPDQLTAIAVTTRPGLPLSLLVGVRFARHLARRLQKPLLPVHHMEAHALQARMEHPEQIGYPFLCLLASGGHCQLVVANGPGRLTLLGQTLDDAPGEAFDKIGRRLRLHILPEYRLWNGGRAIEHAAQLASDPLAYEFPLPLAQQRNCNFSFAGIKNNSFRAIRARERAERTPPDGVISNYGDFCAGLLRSVSRHLMHRTQRAIEYCLLPHRQLFGDTPPTLVMSGGVANNDAIYANIEHLAAQYGCRSFRPSKRYCSDNGVMIAWHGVEQLLQDKEASTRYDYDSIDIQGSAGFAESHEEAVAAAAIKCKWIQPLV</sequence>
<keyword id="KW-0012">Acyltransferase</keyword>
<keyword id="KW-0479">Metal-binding</keyword>
<keyword id="KW-0496">Mitochondrion</keyword>
<keyword id="KW-1185">Reference proteome</keyword>
<keyword id="KW-0808">Transferase</keyword>
<keyword id="KW-0809">Transit peptide</keyword>
<keyword id="KW-0819">tRNA processing</keyword>
<name>OSGP2_DROME</name>
<gene>
    <name evidence="3" type="primary">Tcs4</name>
    <name evidence="3" type="ORF">CG14231</name>
</gene>
<reference key="1">
    <citation type="journal article" date="2000" name="Science">
        <title>The genome sequence of Drosophila melanogaster.</title>
        <authorList>
            <person name="Adams M.D."/>
            <person name="Celniker S.E."/>
            <person name="Holt R.A."/>
            <person name="Evans C.A."/>
            <person name="Gocayne J.D."/>
            <person name="Amanatides P.G."/>
            <person name="Scherer S.E."/>
            <person name="Li P.W."/>
            <person name="Hoskins R.A."/>
            <person name="Galle R.F."/>
            <person name="George R.A."/>
            <person name="Lewis S.E."/>
            <person name="Richards S."/>
            <person name="Ashburner M."/>
            <person name="Henderson S.N."/>
            <person name="Sutton G.G."/>
            <person name="Wortman J.R."/>
            <person name="Yandell M.D."/>
            <person name="Zhang Q."/>
            <person name="Chen L.X."/>
            <person name="Brandon R.C."/>
            <person name="Rogers Y.-H.C."/>
            <person name="Blazej R.G."/>
            <person name="Champe M."/>
            <person name="Pfeiffer B.D."/>
            <person name="Wan K.H."/>
            <person name="Doyle C."/>
            <person name="Baxter E.G."/>
            <person name="Helt G."/>
            <person name="Nelson C.R."/>
            <person name="Miklos G.L.G."/>
            <person name="Abril J.F."/>
            <person name="Agbayani A."/>
            <person name="An H.-J."/>
            <person name="Andrews-Pfannkoch C."/>
            <person name="Baldwin D."/>
            <person name="Ballew R.M."/>
            <person name="Basu A."/>
            <person name="Baxendale J."/>
            <person name="Bayraktaroglu L."/>
            <person name="Beasley E.M."/>
            <person name="Beeson K.Y."/>
            <person name="Benos P.V."/>
            <person name="Berman B.P."/>
            <person name="Bhandari D."/>
            <person name="Bolshakov S."/>
            <person name="Borkova D."/>
            <person name="Botchan M.R."/>
            <person name="Bouck J."/>
            <person name="Brokstein P."/>
            <person name="Brottier P."/>
            <person name="Burtis K.C."/>
            <person name="Busam D.A."/>
            <person name="Butler H."/>
            <person name="Cadieu E."/>
            <person name="Center A."/>
            <person name="Chandra I."/>
            <person name="Cherry J.M."/>
            <person name="Cawley S."/>
            <person name="Dahlke C."/>
            <person name="Davenport L.B."/>
            <person name="Davies P."/>
            <person name="de Pablos B."/>
            <person name="Delcher A."/>
            <person name="Deng Z."/>
            <person name="Mays A.D."/>
            <person name="Dew I."/>
            <person name="Dietz S.M."/>
            <person name="Dodson K."/>
            <person name="Doup L.E."/>
            <person name="Downes M."/>
            <person name="Dugan-Rocha S."/>
            <person name="Dunkov B.C."/>
            <person name="Dunn P."/>
            <person name="Durbin K.J."/>
            <person name="Evangelista C.C."/>
            <person name="Ferraz C."/>
            <person name="Ferriera S."/>
            <person name="Fleischmann W."/>
            <person name="Fosler C."/>
            <person name="Gabrielian A.E."/>
            <person name="Garg N.S."/>
            <person name="Gelbart W.M."/>
            <person name="Glasser K."/>
            <person name="Glodek A."/>
            <person name="Gong F."/>
            <person name="Gorrell J.H."/>
            <person name="Gu Z."/>
            <person name="Guan P."/>
            <person name="Harris M."/>
            <person name="Harris N.L."/>
            <person name="Harvey D.A."/>
            <person name="Heiman T.J."/>
            <person name="Hernandez J.R."/>
            <person name="Houck J."/>
            <person name="Hostin D."/>
            <person name="Houston K.A."/>
            <person name="Howland T.J."/>
            <person name="Wei M.-H."/>
            <person name="Ibegwam C."/>
            <person name="Jalali M."/>
            <person name="Kalush F."/>
            <person name="Karpen G.H."/>
            <person name="Ke Z."/>
            <person name="Kennison J.A."/>
            <person name="Ketchum K.A."/>
            <person name="Kimmel B.E."/>
            <person name="Kodira C.D."/>
            <person name="Kraft C.L."/>
            <person name="Kravitz S."/>
            <person name="Kulp D."/>
            <person name="Lai Z."/>
            <person name="Lasko P."/>
            <person name="Lei Y."/>
            <person name="Levitsky A.A."/>
            <person name="Li J.H."/>
            <person name="Li Z."/>
            <person name="Liang Y."/>
            <person name="Lin X."/>
            <person name="Liu X."/>
            <person name="Mattei B."/>
            <person name="McIntosh T.C."/>
            <person name="McLeod M.P."/>
            <person name="McPherson D."/>
            <person name="Merkulov G."/>
            <person name="Milshina N.V."/>
            <person name="Mobarry C."/>
            <person name="Morris J."/>
            <person name="Moshrefi A."/>
            <person name="Mount S.M."/>
            <person name="Moy M."/>
            <person name="Murphy B."/>
            <person name="Murphy L."/>
            <person name="Muzny D.M."/>
            <person name="Nelson D.L."/>
            <person name="Nelson D.R."/>
            <person name="Nelson K.A."/>
            <person name="Nixon K."/>
            <person name="Nusskern D.R."/>
            <person name="Pacleb J.M."/>
            <person name="Palazzolo M."/>
            <person name="Pittman G.S."/>
            <person name="Pan S."/>
            <person name="Pollard J."/>
            <person name="Puri V."/>
            <person name="Reese M.G."/>
            <person name="Reinert K."/>
            <person name="Remington K."/>
            <person name="Saunders R.D.C."/>
            <person name="Scheeler F."/>
            <person name="Shen H."/>
            <person name="Shue B.C."/>
            <person name="Siden-Kiamos I."/>
            <person name="Simpson M."/>
            <person name="Skupski M.P."/>
            <person name="Smith T.J."/>
            <person name="Spier E."/>
            <person name="Spradling A.C."/>
            <person name="Stapleton M."/>
            <person name="Strong R."/>
            <person name="Sun E."/>
            <person name="Svirskas R."/>
            <person name="Tector C."/>
            <person name="Turner R."/>
            <person name="Venter E."/>
            <person name="Wang A.H."/>
            <person name="Wang X."/>
            <person name="Wang Z.-Y."/>
            <person name="Wassarman D.A."/>
            <person name="Weinstock G.M."/>
            <person name="Weissenbach J."/>
            <person name="Williams S.M."/>
            <person name="Woodage T."/>
            <person name="Worley K.C."/>
            <person name="Wu D."/>
            <person name="Yang S."/>
            <person name="Yao Q.A."/>
            <person name="Ye J."/>
            <person name="Yeh R.-F."/>
            <person name="Zaveri J.S."/>
            <person name="Zhan M."/>
            <person name="Zhang G."/>
            <person name="Zhao Q."/>
            <person name="Zheng L."/>
            <person name="Zheng X.H."/>
            <person name="Zhong F.N."/>
            <person name="Zhong W."/>
            <person name="Zhou X."/>
            <person name="Zhu S.C."/>
            <person name="Zhu X."/>
            <person name="Smith H.O."/>
            <person name="Gibbs R.A."/>
            <person name="Myers E.W."/>
            <person name="Rubin G.M."/>
            <person name="Venter J.C."/>
        </authorList>
    </citation>
    <scope>NUCLEOTIDE SEQUENCE [LARGE SCALE GENOMIC DNA]</scope>
    <source>
        <strain>Berkeley</strain>
    </source>
</reference>
<reference key="2">
    <citation type="journal article" date="2002" name="Genome Biol.">
        <title>Annotation of the Drosophila melanogaster euchromatic genome: a systematic review.</title>
        <authorList>
            <person name="Misra S."/>
            <person name="Crosby M.A."/>
            <person name="Mungall C.J."/>
            <person name="Matthews B.B."/>
            <person name="Campbell K.S."/>
            <person name="Hradecky P."/>
            <person name="Huang Y."/>
            <person name="Kaminker J.S."/>
            <person name="Millburn G.H."/>
            <person name="Prochnik S.E."/>
            <person name="Smith C.D."/>
            <person name="Tupy J.L."/>
            <person name="Whitfield E.J."/>
            <person name="Bayraktaroglu L."/>
            <person name="Berman B.P."/>
            <person name="Bettencourt B.R."/>
            <person name="Celniker S.E."/>
            <person name="de Grey A.D.N.J."/>
            <person name="Drysdale R.A."/>
            <person name="Harris N.L."/>
            <person name="Richter J."/>
            <person name="Russo S."/>
            <person name="Schroeder A.J."/>
            <person name="Shu S.Q."/>
            <person name="Stapleton M."/>
            <person name="Yamada C."/>
            <person name="Ashburner M."/>
            <person name="Gelbart W.M."/>
            <person name="Rubin G.M."/>
            <person name="Lewis S.E."/>
        </authorList>
    </citation>
    <scope>GENOME REANNOTATION</scope>
    <source>
        <strain>Berkeley</strain>
    </source>
</reference>
<reference key="3">
    <citation type="journal article" date="2002" name="Genome Biol.">
        <title>A Drosophila full-length cDNA resource.</title>
        <authorList>
            <person name="Stapleton M."/>
            <person name="Carlson J.W."/>
            <person name="Brokstein P."/>
            <person name="Yu C."/>
            <person name="Champe M."/>
            <person name="George R.A."/>
            <person name="Guarin H."/>
            <person name="Kronmiller B."/>
            <person name="Pacleb J.M."/>
            <person name="Park S."/>
            <person name="Wan K.H."/>
            <person name="Rubin G.M."/>
            <person name="Celniker S.E."/>
        </authorList>
    </citation>
    <scope>NUCLEOTIDE SEQUENCE [LARGE SCALE MRNA]</scope>
    <source>
        <strain>Berkeley</strain>
        <tissue>Embryo</tissue>
        <tissue>Head</tissue>
    </source>
</reference>
<accession>Q9VWD6</accession>
<accession>Q960S6</accession>
<proteinExistence type="evidence at transcript level"/>
<comment type="function">
    <text evidence="1">Required for the formation of a threonylcarbamoyl group on adenosine at position 37 (t(6)A37) in mitochondrial tRNAs that read codons beginning with adenine. Probably involved in the transfer of the threonylcarbamoyl moiety of threonylcarbamoyl-AMP (TC-AMP) to the N6 group of A37. Involved in mitochondrial genome maintenance.</text>
</comment>
<comment type="catalytic activity">
    <reaction evidence="1">
        <text>L-threonylcarbamoyladenylate + adenosine(37) in tRNA = N(6)-L-threonylcarbamoyladenosine(37) in tRNA + AMP + H(+)</text>
        <dbReference type="Rhea" id="RHEA:37059"/>
        <dbReference type="Rhea" id="RHEA-COMP:10162"/>
        <dbReference type="Rhea" id="RHEA-COMP:10163"/>
        <dbReference type="ChEBI" id="CHEBI:15378"/>
        <dbReference type="ChEBI" id="CHEBI:73682"/>
        <dbReference type="ChEBI" id="CHEBI:74411"/>
        <dbReference type="ChEBI" id="CHEBI:74418"/>
        <dbReference type="ChEBI" id="CHEBI:456215"/>
        <dbReference type="EC" id="2.3.1.234"/>
    </reaction>
</comment>
<comment type="cofactor">
    <cofactor evidence="1">
        <name>a divalent metal cation</name>
        <dbReference type="ChEBI" id="CHEBI:60240"/>
    </cofactor>
    <text evidence="1">Binds 1 divalent metal cation per subunit.</text>
</comment>
<comment type="subunit">
    <text evidence="1">Homodimer.</text>
</comment>
<comment type="subcellular location">
    <subcellularLocation>
        <location evidence="1">Mitochondrion</location>
    </subcellularLocation>
</comment>
<comment type="similarity">
    <text evidence="1">Belongs to the KAE1 / TsaD family.</text>
</comment>
<comment type="sequence caution" evidence="2">
    <conflict type="erroneous initiation">
        <sequence resource="EMBL-CDS" id="AAK93306"/>
    </conflict>
</comment>